<feature type="chain" id="PRO_0000198080" description="Ribosomal RNA large subunit methyltransferase H">
    <location>
        <begin position="1"/>
        <end position="159"/>
    </location>
</feature>
<feature type="binding site" evidence="1">
    <location>
        <position position="76"/>
    </location>
    <ligand>
        <name>S-adenosyl-L-methionine</name>
        <dbReference type="ChEBI" id="CHEBI:59789"/>
    </ligand>
</feature>
<feature type="binding site" evidence="1">
    <location>
        <position position="108"/>
    </location>
    <ligand>
        <name>S-adenosyl-L-methionine</name>
        <dbReference type="ChEBI" id="CHEBI:59789"/>
    </ligand>
</feature>
<feature type="binding site" evidence="1">
    <location>
        <begin position="127"/>
        <end position="132"/>
    </location>
    <ligand>
        <name>S-adenosyl-L-methionine</name>
        <dbReference type="ChEBI" id="CHEBI:59789"/>
    </ligand>
</feature>
<reference key="1">
    <citation type="journal article" date="2003" name="Nature">
        <title>The genome sequence of Bacillus anthracis Ames and comparison to closely related bacteria.</title>
        <authorList>
            <person name="Read T.D."/>
            <person name="Peterson S.N."/>
            <person name="Tourasse N.J."/>
            <person name="Baillie L.W."/>
            <person name="Paulsen I.T."/>
            <person name="Nelson K.E."/>
            <person name="Tettelin H."/>
            <person name="Fouts D.E."/>
            <person name="Eisen J.A."/>
            <person name="Gill S.R."/>
            <person name="Holtzapple E.K."/>
            <person name="Okstad O.A."/>
            <person name="Helgason E."/>
            <person name="Rilstone J."/>
            <person name="Wu M."/>
            <person name="Kolonay J.F."/>
            <person name="Beanan M.J."/>
            <person name="Dodson R.J."/>
            <person name="Brinkac L.M."/>
            <person name="Gwinn M.L."/>
            <person name="DeBoy R.T."/>
            <person name="Madpu R."/>
            <person name="Daugherty S.C."/>
            <person name="Durkin A.S."/>
            <person name="Haft D.H."/>
            <person name="Nelson W.C."/>
            <person name="Peterson J.D."/>
            <person name="Pop M."/>
            <person name="Khouri H.M."/>
            <person name="Radune D."/>
            <person name="Benton J.L."/>
            <person name="Mahamoud Y."/>
            <person name="Jiang L."/>
            <person name="Hance I.R."/>
            <person name="Weidman J.F."/>
            <person name="Berry K.J."/>
            <person name="Plaut R.D."/>
            <person name="Wolf A.M."/>
            <person name="Watkins K.L."/>
            <person name="Nierman W.C."/>
            <person name="Hazen A."/>
            <person name="Cline R.T."/>
            <person name="Redmond C."/>
            <person name="Thwaite J.E."/>
            <person name="White O."/>
            <person name="Salzberg S.L."/>
            <person name="Thomason B."/>
            <person name="Friedlander A.M."/>
            <person name="Koehler T.M."/>
            <person name="Hanna P.C."/>
            <person name="Kolstoe A.-B."/>
            <person name="Fraser C.M."/>
        </authorList>
    </citation>
    <scope>NUCLEOTIDE SEQUENCE [LARGE SCALE GENOMIC DNA]</scope>
    <source>
        <strain>Ames / isolate Porton</strain>
    </source>
</reference>
<reference key="2">
    <citation type="journal article" date="2009" name="J. Bacteriol.">
        <title>The complete genome sequence of Bacillus anthracis Ames 'Ancestor'.</title>
        <authorList>
            <person name="Ravel J."/>
            <person name="Jiang L."/>
            <person name="Stanley S.T."/>
            <person name="Wilson M.R."/>
            <person name="Decker R.S."/>
            <person name="Read T.D."/>
            <person name="Worsham P."/>
            <person name="Keim P.S."/>
            <person name="Salzberg S.L."/>
            <person name="Fraser-Liggett C.M."/>
            <person name="Rasko D.A."/>
        </authorList>
    </citation>
    <scope>NUCLEOTIDE SEQUENCE [LARGE SCALE GENOMIC DNA]</scope>
    <source>
        <strain>Ames ancestor</strain>
    </source>
</reference>
<reference key="3">
    <citation type="submission" date="2004-01" db="EMBL/GenBank/DDBJ databases">
        <title>Complete genome sequence of Bacillus anthracis Sterne.</title>
        <authorList>
            <person name="Brettin T.S."/>
            <person name="Bruce D."/>
            <person name="Challacombe J.F."/>
            <person name="Gilna P."/>
            <person name="Han C."/>
            <person name="Hill K."/>
            <person name="Hitchcock P."/>
            <person name="Jackson P."/>
            <person name="Keim P."/>
            <person name="Longmire J."/>
            <person name="Lucas S."/>
            <person name="Okinaka R."/>
            <person name="Richardson P."/>
            <person name="Rubin E."/>
            <person name="Tice H."/>
        </authorList>
    </citation>
    <scope>NUCLEOTIDE SEQUENCE [LARGE SCALE GENOMIC DNA]</scope>
    <source>
        <strain>Sterne</strain>
    </source>
</reference>
<protein>
    <recommendedName>
        <fullName evidence="1">Ribosomal RNA large subunit methyltransferase H</fullName>
        <ecNumber evidence="1">2.1.1.177</ecNumber>
    </recommendedName>
    <alternativeName>
        <fullName evidence="1">23S rRNA (pseudouridine1915-N3)-methyltransferase</fullName>
    </alternativeName>
    <alternativeName>
        <fullName evidence="1">23S rRNA m3Psi1915 methyltransferase</fullName>
    </alternativeName>
    <alternativeName>
        <fullName evidence="1">rRNA (pseudouridine-N3-)-methyltransferase RlmH</fullName>
    </alternativeName>
</protein>
<dbReference type="EC" id="2.1.1.177" evidence="1"/>
<dbReference type="EMBL" id="AE016879">
    <property type="protein sequence ID" value="AAP29340.2"/>
    <property type="molecule type" value="Genomic_DNA"/>
</dbReference>
<dbReference type="EMBL" id="AE017334">
    <property type="protein sequence ID" value="AAT34869.1"/>
    <property type="status" value="ALT_INIT"/>
    <property type="molecule type" value="Genomic_DNA"/>
</dbReference>
<dbReference type="EMBL" id="AE017225">
    <property type="protein sequence ID" value="AAT57599.1"/>
    <property type="status" value="ALT_INIT"/>
    <property type="molecule type" value="Genomic_DNA"/>
</dbReference>
<dbReference type="RefSeq" id="NP_847854.2">
    <property type="nucleotide sequence ID" value="NC_003997.3"/>
</dbReference>
<dbReference type="RefSeq" id="WP_001027003.1">
    <property type="nucleotide sequence ID" value="NZ_WXXJ01000017.1"/>
</dbReference>
<dbReference type="SMR" id="P59730"/>
<dbReference type="STRING" id="261594.GBAA_5708"/>
<dbReference type="DNASU" id="1085462"/>
<dbReference type="GeneID" id="93005667"/>
<dbReference type="KEGG" id="ban:BA_5708"/>
<dbReference type="KEGG" id="bar:GBAA_5708"/>
<dbReference type="KEGG" id="bat:BAS5312"/>
<dbReference type="PATRIC" id="fig|198094.11.peg.5670"/>
<dbReference type="eggNOG" id="COG1576">
    <property type="taxonomic scope" value="Bacteria"/>
</dbReference>
<dbReference type="HOGENOM" id="CLU_100552_0_0_9"/>
<dbReference type="OMA" id="NEPYHHQ"/>
<dbReference type="OrthoDB" id="9806643at2"/>
<dbReference type="Proteomes" id="UP000000427">
    <property type="component" value="Chromosome"/>
</dbReference>
<dbReference type="Proteomes" id="UP000000594">
    <property type="component" value="Chromosome"/>
</dbReference>
<dbReference type="GO" id="GO:0005737">
    <property type="term" value="C:cytoplasm"/>
    <property type="evidence" value="ECO:0007669"/>
    <property type="project" value="UniProtKB-SubCell"/>
</dbReference>
<dbReference type="GO" id="GO:0070038">
    <property type="term" value="F:rRNA (pseudouridine-N3-)-methyltransferase activity"/>
    <property type="evidence" value="ECO:0007669"/>
    <property type="project" value="UniProtKB-UniRule"/>
</dbReference>
<dbReference type="CDD" id="cd18081">
    <property type="entry name" value="RlmH-like"/>
    <property type="match status" value="1"/>
</dbReference>
<dbReference type="Gene3D" id="3.40.1280.10">
    <property type="match status" value="1"/>
</dbReference>
<dbReference type="HAMAP" id="MF_00658">
    <property type="entry name" value="23SrRNA_methyltr_H"/>
    <property type="match status" value="1"/>
</dbReference>
<dbReference type="InterPro" id="IPR029028">
    <property type="entry name" value="Alpha/beta_knot_MTases"/>
</dbReference>
<dbReference type="InterPro" id="IPR003742">
    <property type="entry name" value="RlmH-like"/>
</dbReference>
<dbReference type="InterPro" id="IPR029026">
    <property type="entry name" value="tRNA_m1G_MTases_N"/>
</dbReference>
<dbReference type="NCBIfam" id="NF000985">
    <property type="entry name" value="PRK00103.1-3"/>
    <property type="match status" value="1"/>
</dbReference>
<dbReference type="NCBIfam" id="TIGR00246">
    <property type="entry name" value="tRNA_RlmH_YbeA"/>
    <property type="match status" value="1"/>
</dbReference>
<dbReference type="PANTHER" id="PTHR33603">
    <property type="entry name" value="METHYLTRANSFERASE"/>
    <property type="match status" value="1"/>
</dbReference>
<dbReference type="PANTHER" id="PTHR33603:SF1">
    <property type="entry name" value="RIBOSOMAL RNA LARGE SUBUNIT METHYLTRANSFERASE H"/>
    <property type="match status" value="1"/>
</dbReference>
<dbReference type="Pfam" id="PF02590">
    <property type="entry name" value="SPOUT_MTase"/>
    <property type="match status" value="1"/>
</dbReference>
<dbReference type="PIRSF" id="PIRSF004505">
    <property type="entry name" value="MT_bac"/>
    <property type="match status" value="1"/>
</dbReference>
<dbReference type="SUPFAM" id="SSF75217">
    <property type="entry name" value="alpha/beta knot"/>
    <property type="match status" value="1"/>
</dbReference>
<accession>P59730</accession>
<accession>Q6HQ39</accession>
<accession>Q6KJI3</accession>
<name>RLMH_BACAN</name>
<organism>
    <name type="scientific">Bacillus anthracis</name>
    <dbReference type="NCBI Taxonomy" id="1392"/>
    <lineage>
        <taxon>Bacteria</taxon>
        <taxon>Bacillati</taxon>
        <taxon>Bacillota</taxon>
        <taxon>Bacilli</taxon>
        <taxon>Bacillales</taxon>
        <taxon>Bacillaceae</taxon>
        <taxon>Bacillus</taxon>
        <taxon>Bacillus cereus group</taxon>
    </lineage>
</organism>
<gene>
    <name evidence="1" type="primary">rlmH</name>
    <name type="ordered locus">BA_5708</name>
    <name type="ordered locus">GBAA_5708</name>
    <name type="ordered locus">BAS5312</name>
</gene>
<evidence type="ECO:0000255" key="1">
    <source>
        <dbReference type="HAMAP-Rule" id="MF_00658"/>
    </source>
</evidence>
<evidence type="ECO:0000305" key="2"/>
<sequence length="159" mass="17927">MNISIISIGKLKEKYLKQGIAEYLKRLSAYAKVEVIELPDEKAPENLSEAEMLIVKEKEGIRILDKISDDTHVIALAIEGKQKSSEEFAVSLDRLATYGKSKVAFVIGGSLGLSSEVMKRSNESLSFSKMTLPHQLMRLVLLEQVYRAFRINRGEPYHK</sequence>
<proteinExistence type="inferred from homology"/>
<keyword id="KW-0963">Cytoplasm</keyword>
<keyword id="KW-0489">Methyltransferase</keyword>
<keyword id="KW-1185">Reference proteome</keyword>
<keyword id="KW-0698">rRNA processing</keyword>
<keyword id="KW-0949">S-adenosyl-L-methionine</keyword>
<keyword id="KW-0808">Transferase</keyword>
<comment type="function">
    <text evidence="1">Specifically methylates the pseudouridine at position 1915 (m3Psi1915) in 23S rRNA.</text>
</comment>
<comment type="catalytic activity">
    <reaction evidence="1">
        <text>pseudouridine(1915) in 23S rRNA + S-adenosyl-L-methionine = N(3)-methylpseudouridine(1915) in 23S rRNA + S-adenosyl-L-homocysteine + H(+)</text>
        <dbReference type="Rhea" id="RHEA:42752"/>
        <dbReference type="Rhea" id="RHEA-COMP:10221"/>
        <dbReference type="Rhea" id="RHEA-COMP:10222"/>
        <dbReference type="ChEBI" id="CHEBI:15378"/>
        <dbReference type="ChEBI" id="CHEBI:57856"/>
        <dbReference type="ChEBI" id="CHEBI:59789"/>
        <dbReference type="ChEBI" id="CHEBI:65314"/>
        <dbReference type="ChEBI" id="CHEBI:74486"/>
        <dbReference type="EC" id="2.1.1.177"/>
    </reaction>
</comment>
<comment type="subunit">
    <text evidence="1">Homodimer.</text>
</comment>
<comment type="subcellular location">
    <subcellularLocation>
        <location evidence="1">Cytoplasm</location>
    </subcellularLocation>
</comment>
<comment type="similarity">
    <text evidence="1">Belongs to the RNA methyltransferase RlmH family.</text>
</comment>
<comment type="sequence caution" evidence="2">
    <conflict type="erroneous initiation">
        <sequence resource="EMBL-CDS" id="AAT34869"/>
    </conflict>
    <text>Extended N-terminus.</text>
</comment>
<comment type="sequence caution" evidence="2">
    <conflict type="erroneous initiation">
        <sequence resource="EMBL-CDS" id="AAT57599"/>
    </conflict>
    <text>Extended N-terminus.</text>
</comment>